<comment type="function">
    <text evidence="1">Multifunctional enzyme that catalyzes the SAM-dependent methylations of uroporphyrinogen III at position C-2 and C-7 to form precorrin-2 via precorrin-1. Then it catalyzes the NAD-dependent ring dehydrogenation of precorrin-2 to yield sirohydrochlorin. Finally, it catalyzes the ferrochelation of sirohydrochlorin to yield siroheme.</text>
</comment>
<comment type="catalytic activity">
    <reaction evidence="1">
        <text>uroporphyrinogen III + 2 S-adenosyl-L-methionine = precorrin-2 + 2 S-adenosyl-L-homocysteine + H(+)</text>
        <dbReference type="Rhea" id="RHEA:32459"/>
        <dbReference type="ChEBI" id="CHEBI:15378"/>
        <dbReference type="ChEBI" id="CHEBI:57308"/>
        <dbReference type="ChEBI" id="CHEBI:57856"/>
        <dbReference type="ChEBI" id="CHEBI:58827"/>
        <dbReference type="ChEBI" id="CHEBI:59789"/>
        <dbReference type="EC" id="2.1.1.107"/>
    </reaction>
</comment>
<comment type="catalytic activity">
    <reaction evidence="1">
        <text>precorrin-2 + NAD(+) = sirohydrochlorin + NADH + 2 H(+)</text>
        <dbReference type="Rhea" id="RHEA:15613"/>
        <dbReference type="ChEBI" id="CHEBI:15378"/>
        <dbReference type="ChEBI" id="CHEBI:57540"/>
        <dbReference type="ChEBI" id="CHEBI:57945"/>
        <dbReference type="ChEBI" id="CHEBI:58351"/>
        <dbReference type="ChEBI" id="CHEBI:58827"/>
        <dbReference type="EC" id="1.3.1.76"/>
    </reaction>
</comment>
<comment type="catalytic activity">
    <reaction evidence="1">
        <text>siroheme + 2 H(+) = sirohydrochlorin + Fe(2+)</text>
        <dbReference type="Rhea" id="RHEA:24360"/>
        <dbReference type="ChEBI" id="CHEBI:15378"/>
        <dbReference type="ChEBI" id="CHEBI:29033"/>
        <dbReference type="ChEBI" id="CHEBI:58351"/>
        <dbReference type="ChEBI" id="CHEBI:60052"/>
        <dbReference type="EC" id="4.99.1.4"/>
    </reaction>
</comment>
<comment type="pathway">
    <text evidence="1">Cofactor biosynthesis; adenosylcobalamin biosynthesis; precorrin-2 from uroporphyrinogen III: step 1/1.</text>
</comment>
<comment type="pathway">
    <text evidence="1">Cofactor biosynthesis; adenosylcobalamin biosynthesis; sirohydrochlorin from precorrin-2: step 1/1.</text>
</comment>
<comment type="pathway">
    <text evidence="1">Porphyrin-containing compound metabolism; siroheme biosynthesis; precorrin-2 from uroporphyrinogen III: step 1/1.</text>
</comment>
<comment type="pathway">
    <text evidence="1">Porphyrin-containing compound metabolism; siroheme biosynthesis; siroheme from sirohydrochlorin: step 1/1.</text>
</comment>
<comment type="pathway">
    <text evidence="1">Porphyrin-containing compound metabolism; siroheme biosynthesis; sirohydrochlorin from precorrin-2: step 1/1.</text>
</comment>
<comment type="similarity">
    <text evidence="1">In the N-terminal section; belongs to the precorrin-2 dehydrogenase / sirohydrochlorin ferrochelatase family.</text>
</comment>
<comment type="similarity">
    <text evidence="1">In the C-terminal section; belongs to the precorrin methyltransferase family.</text>
</comment>
<name>CYSG_PSEU2</name>
<gene>
    <name evidence="1" type="primary">cysG</name>
    <name type="ordered locus">Psyr_3174</name>
</gene>
<protein>
    <recommendedName>
        <fullName evidence="1">Siroheme synthase</fullName>
    </recommendedName>
    <domain>
        <recommendedName>
            <fullName evidence="1">Uroporphyrinogen-III C-methyltransferase</fullName>
            <shortName evidence="1">Urogen III methylase</shortName>
            <ecNumber evidence="1">2.1.1.107</ecNumber>
        </recommendedName>
        <alternativeName>
            <fullName evidence="1">SUMT</fullName>
        </alternativeName>
        <alternativeName>
            <fullName evidence="1">Uroporphyrinogen III methylase</fullName>
            <shortName evidence="1">UROM</shortName>
        </alternativeName>
    </domain>
    <domain>
        <recommendedName>
            <fullName evidence="1">Precorrin-2 dehydrogenase</fullName>
            <ecNumber evidence="1">1.3.1.76</ecNumber>
        </recommendedName>
    </domain>
    <domain>
        <recommendedName>
            <fullName evidence="1">Sirohydrochlorin ferrochelatase</fullName>
            <ecNumber evidence="1">4.99.1.4</ecNumber>
        </recommendedName>
    </domain>
</protein>
<organism>
    <name type="scientific">Pseudomonas syringae pv. syringae (strain B728a)</name>
    <dbReference type="NCBI Taxonomy" id="205918"/>
    <lineage>
        <taxon>Bacteria</taxon>
        <taxon>Pseudomonadati</taxon>
        <taxon>Pseudomonadota</taxon>
        <taxon>Gammaproteobacteria</taxon>
        <taxon>Pseudomonadales</taxon>
        <taxon>Pseudomonadaceae</taxon>
        <taxon>Pseudomonas</taxon>
        <taxon>Pseudomonas syringae</taxon>
    </lineage>
</organism>
<reference key="1">
    <citation type="journal article" date="2005" name="Proc. Natl. Acad. Sci. U.S.A.">
        <title>Comparison of the complete genome sequences of Pseudomonas syringae pv. syringae B728a and pv. tomato DC3000.</title>
        <authorList>
            <person name="Feil H."/>
            <person name="Feil W.S."/>
            <person name="Chain P."/>
            <person name="Larimer F."/>
            <person name="Dibartolo G."/>
            <person name="Copeland A."/>
            <person name="Lykidis A."/>
            <person name="Trong S."/>
            <person name="Nolan M."/>
            <person name="Goltsman E."/>
            <person name="Thiel J."/>
            <person name="Malfatti S."/>
            <person name="Loper J.E."/>
            <person name="Lapidus A."/>
            <person name="Detter J.C."/>
            <person name="Land M."/>
            <person name="Richardson P.M."/>
            <person name="Kyrpides N.C."/>
            <person name="Ivanova N."/>
            <person name="Lindow S.E."/>
        </authorList>
    </citation>
    <scope>NUCLEOTIDE SEQUENCE [LARGE SCALE GENOMIC DNA]</scope>
    <source>
        <strain>B728a</strain>
    </source>
</reference>
<accession>Q4ZRL6</accession>
<sequence>MEFLPLFHNLRGSRVLVVGGGEIALRKSRLIADAGAVLRVVAPEIEAQLSELVVQSGGEMILRGYSECDLDGCVLIIAATDDEPLNAQVSRDARLRCVPVNVVDAPALCTVIFPAIVDRSPLVIAVSSGGDAPVLARLIRAKLETWIPSSYGQLAGLAARFRNQVKGLFPNVQQRRAFWEEVFQGAIADRQLAGQGAEAERMLIAKIAGEPPPETGEVYLVGAGPGDPDLLTFRALRLMQQADVVLYDRLVAPTILDLCRRDAERVYVGKRRAEHAVPQEQINQQLVALAKQGKRVVRLKGGDPFIFGRGGEEIEELAAHGIPFQVVPGITAASGCAAYAGIPLTHRDHAQSVRFITGHLKNGTTDLPWSDLVAPAQTLVFYMGLIGLPVICEQLIRHGRSADTPAALVEQGTTVNQRVFTGTLANLPQLVAEHDVHAPTLVIIGEVVKLREKLAWFEGAQATL</sequence>
<keyword id="KW-0169">Cobalamin biosynthesis</keyword>
<keyword id="KW-0456">Lyase</keyword>
<keyword id="KW-0489">Methyltransferase</keyword>
<keyword id="KW-0511">Multifunctional enzyme</keyword>
<keyword id="KW-0520">NAD</keyword>
<keyword id="KW-0560">Oxidoreductase</keyword>
<keyword id="KW-0597">Phosphoprotein</keyword>
<keyword id="KW-0627">Porphyrin biosynthesis</keyword>
<keyword id="KW-0949">S-adenosyl-L-methionine</keyword>
<keyword id="KW-0808">Transferase</keyword>
<dbReference type="EC" id="2.1.1.107" evidence="1"/>
<dbReference type="EC" id="1.3.1.76" evidence="1"/>
<dbReference type="EC" id="4.99.1.4" evidence="1"/>
<dbReference type="EMBL" id="CP000075">
    <property type="protein sequence ID" value="AAY38206.1"/>
    <property type="molecule type" value="Genomic_DNA"/>
</dbReference>
<dbReference type="RefSeq" id="WP_003405073.1">
    <property type="nucleotide sequence ID" value="NC_007005.1"/>
</dbReference>
<dbReference type="RefSeq" id="YP_236244.1">
    <property type="nucleotide sequence ID" value="NC_007005.1"/>
</dbReference>
<dbReference type="SMR" id="Q4ZRL6"/>
<dbReference type="STRING" id="205918.Psyr_3174"/>
<dbReference type="KEGG" id="psb:Psyr_3174"/>
<dbReference type="PATRIC" id="fig|205918.7.peg.3239"/>
<dbReference type="eggNOG" id="COG0007">
    <property type="taxonomic scope" value="Bacteria"/>
</dbReference>
<dbReference type="eggNOG" id="COG1648">
    <property type="taxonomic scope" value="Bacteria"/>
</dbReference>
<dbReference type="HOGENOM" id="CLU_011276_2_1_6"/>
<dbReference type="OrthoDB" id="9815856at2"/>
<dbReference type="UniPathway" id="UPA00148">
    <property type="reaction ID" value="UER00211"/>
</dbReference>
<dbReference type="UniPathway" id="UPA00148">
    <property type="reaction ID" value="UER00222"/>
</dbReference>
<dbReference type="UniPathway" id="UPA00262">
    <property type="reaction ID" value="UER00211"/>
</dbReference>
<dbReference type="UniPathway" id="UPA00262">
    <property type="reaction ID" value="UER00222"/>
</dbReference>
<dbReference type="UniPathway" id="UPA00262">
    <property type="reaction ID" value="UER00376"/>
</dbReference>
<dbReference type="Proteomes" id="UP000000426">
    <property type="component" value="Chromosome"/>
</dbReference>
<dbReference type="GO" id="GO:0051287">
    <property type="term" value="F:NAD binding"/>
    <property type="evidence" value="ECO:0007669"/>
    <property type="project" value="InterPro"/>
</dbReference>
<dbReference type="GO" id="GO:0043115">
    <property type="term" value="F:precorrin-2 dehydrogenase activity"/>
    <property type="evidence" value="ECO:0007669"/>
    <property type="project" value="UniProtKB-UniRule"/>
</dbReference>
<dbReference type="GO" id="GO:0051266">
    <property type="term" value="F:sirohydrochlorin ferrochelatase activity"/>
    <property type="evidence" value="ECO:0007669"/>
    <property type="project" value="UniProtKB-EC"/>
</dbReference>
<dbReference type="GO" id="GO:0004851">
    <property type="term" value="F:uroporphyrin-III C-methyltransferase activity"/>
    <property type="evidence" value="ECO:0007669"/>
    <property type="project" value="UniProtKB-UniRule"/>
</dbReference>
<dbReference type="GO" id="GO:0009236">
    <property type="term" value="P:cobalamin biosynthetic process"/>
    <property type="evidence" value="ECO:0007669"/>
    <property type="project" value="UniProtKB-UniRule"/>
</dbReference>
<dbReference type="GO" id="GO:0032259">
    <property type="term" value="P:methylation"/>
    <property type="evidence" value="ECO:0007669"/>
    <property type="project" value="UniProtKB-KW"/>
</dbReference>
<dbReference type="GO" id="GO:0019354">
    <property type="term" value="P:siroheme biosynthetic process"/>
    <property type="evidence" value="ECO:0007669"/>
    <property type="project" value="UniProtKB-UniRule"/>
</dbReference>
<dbReference type="CDD" id="cd11642">
    <property type="entry name" value="SUMT"/>
    <property type="match status" value="1"/>
</dbReference>
<dbReference type="FunFam" id="3.30.160.110:FF:000001">
    <property type="entry name" value="Siroheme synthase"/>
    <property type="match status" value="1"/>
</dbReference>
<dbReference type="FunFam" id="3.30.950.10:FF:000001">
    <property type="entry name" value="Siroheme synthase"/>
    <property type="match status" value="1"/>
</dbReference>
<dbReference type="FunFam" id="3.40.1010.10:FF:000001">
    <property type="entry name" value="Siroheme synthase"/>
    <property type="match status" value="1"/>
</dbReference>
<dbReference type="Gene3D" id="3.40.1010.10">
    <property type="entry name" value="Cobalt-precorrin-4 Transmethylase, Domain 1"/>
    <property type="match status" value="1"/>
</dbReference>
<dbReference type="Gene3D" id="3.30.950.10">
    <property type="entry name" value="Methyltransferase, Cobalt-precorrin-4 Transmethylase, Domain 2"/>
    <property type="match status" value="1"/>
</dbReference>
<dbReference type="Gene3D" id="3.40.50.720">
    <property type="entry name" value="NAD(P)-binding Rossmann-like Domain"/>
    <property type="match status" value="1"/>
</dbReference>
<dbReference type="Gene3D" id="1.10.8.210">
    <property type="entry name" value="Sirohaem synthase, dimerisation domain"/>
    <property type="match status" value="1"/>
</dbReference>
<dbReference type="Gene3D" id="3.30.160.110">
    <property type="entry name" value="Siroheme synthase, domain 2"/>
    <property type="match status" value="1"/>
</dbReference>
<dbReference type="HAMAP" id="MF_01646">
    <property type="entry name" value="Siroheme_synth"/>
    <property type="match status" value="1"/>
</dbReference>
<dbReference type="InterPro" id="IPR000878">
    <property type="entry name" value="4pyrrol_Mease"/>
</dbReference>
<dbReference type="InterPro" id="IPR035996">
    <property type="entry name" value="4pyrrol_Methylase_sf"/>
</dbReference>
<dbReference type="InterPro" id="IPR014777">
    <property type="entry name" value="4pyrrole_Mease_sub1"/>
</dbReference>
<dbReference type="InterPro" id="IPR014776">
    <property type="entry name" value="4pyrrole_Mease_sub2"/>
</dbReference>
<dbReference type="InterPro" id="IPR006366">
    <property type="entry name" value="CobA/CysG_C"/>
</dbReference>
<dbReference type="InterPro" id="IPR036291">
    <property type="entry name" value="NAD(P)-bd_dom_sf"/>
</dbReference>
<dbReference type="InterPro" id="IPR050161">
    <property type="entry name" value="Siro_Cobalamin_biosynth"/>
</dbReference>
<dbReference type="InterPro" id="IPR037115">
    <property type="entry name" value="Sirohaem_synt_dimer_dom_sf"/>
</dbReference>
<dbReference type="InterPro" id="IPR012409">
    <property type="entry name" value="Sirohaem_synth"/>
</dbReference>
<dbReference type="InterPro" id="IPR028281">
    <property type="entry name" value="Sirohaem_synthase_central"/>
</dbReference>
<dbReference type="InterPro" id="IPR019478">
    <property type="entry name" value="Sirohaem_synthase_dimer_dom"/>
</dbReference>
<dbReference type="InterPro" id="IPR006367">
    <property type="entry name" value="Sirohaem_synthase_N"/>
</dbReference>
<dbReference type="InterPro" id="IPR003043">
    <property type="entry name" value="Uropor_MeTrfase_CS"/>
</dbReference>
<dbReference type="NCBIfam" id="TIGR01469">
    <property type="entry name" value="cobA_cysG_Cterm"/>
    <property type="match status" value="1"/>
</dbReference>
<dbReference type="NCBIfam" id="TIGR01470">
    <property type="entry name" value="cysG_Nterm"/>
    <property type="match status" value="1"/>
</dbReference>
<dbReference type="NCBIfam" id="NF004790">
    <property type="entry name" value="PRK06136.1"/>
    <property type="match status" value="1"/>
</dbReference>
<dbReference type="NCBIfam" id="NF007922">
    <property type="entry name" value="PRK10637.1"/>
    <property type="match status" value="1"/>
</dbReference>
<dbReference type="PANTHER" id="PTHR45790:SF1">
    <property type="entry name" value="SIROHEME SYNTHASE"/>
    <property type="match status" value="1"/>
</dbReference>
<dbReference type="PANTHER" id="PTHR45790">
    <property type="entry name" value="SIROHEME SYNTHASE-RELATED"/>
    <property type="match status" value="1"/>
</dbReference>
<dbReference type="Pfam" id="PF10414">
    <property type="entry name" value="CysG_dimeriser"/>
    <property type="match status" value="1"/>
</dbReference>
<dbReference type="Pfam" id="PF13241">
    <property type="entry name" value="NAD_binding_7"/>
    <property type="match status" value="1"/>
</dbReference>
<dbReference type="Pfam" id="PF14824">
    <property type="entry name" value="Sirohm_synth_M"/>
    <property type="match status" value="1"/>
</dbReference>
<dbReference type="Pfam" id="PF00590">
    <property type="entry name" value="TP_methylase"/>
    <property type="match status" value="1"/>
</dbReference>
<dbReference type="PIRSF" id="PIRSF036426">
    <property type="entry name" value="Sirohaem_synth"/>
    <property type="match status" value="1"/>
</dbReference>
<dbReference type="SUPFAM" id="SSF51735">
    <property type="entry name" value="NAD(P)-binding Rossmann-fold domains"/>
    <property type="match status" value="1"/>
</dbReference>
<dbReference type="SUPFAM" id="SSF75615">
    <property type="entry name" value="Siroheme synthase middle domains-like"/>
    <property type="match status" value="1"/>
</dbReference>
<dbReference type="SUPFAM" id="SSF53790">
    <property type="entry name" value="Tetrapyrrole methylase"/>
    <property type="match status" value="1"/>
</dbReference>
<dbReference type="PROSITE" id="PS00840">
    <property type="entry name" value="SUMT_2"/>
    <property type="match status" value="1"/>
</dbReference>
<evidence type="ECO:0000255" key="1">
    <source>
        <dbReference type="HAMAP-Rule" id="MF_01646"/>
    </source>
</evidence>
<proteinExistence type="inferred from homology"/>
<feature type="chain" id="PRO_0000330544" description="Siroheme synthase">
    <location>
        <begin position="1"/>
        <end position="464"/>
    </location>
</feature>
<feature type="region of interest" description="Precorrin-2 dehydrogenase /sirohydrochlorin ferrochelatase" evidence="1">
    <location>
        <begin position="1"/>
        <end position="203"/>
    </location>
</feature>
<feature type="region of interest" description="Uroporphyrinogen-III C-methyltransferase" evidence="1">
    <location>
        <begin position="216"/>
        <end position="464"/>
    </location>
</feature>
<feature type="active site" description="Proton acceptor" evidence="1">
    <location>
        <position position="248"/>
    </location>
</feature>
<feature type="active site" description="Proton donor" evidence="1">
    <location>
        <position position="270"/>
    </location>
</feature>
<feature type="binding site" evidence="1">
    <location>
        <begin position="22"/>
        <end position="23"/>
    </location>
    <ligand>
        <name>NAD(+)</name>
        <dbReference type="ChEBI" id="CHEBI:57540"/>
    </ligand>
</feature>
<feature type="binding site" evidence="1">
    <location>
        <begin position="43"/>
        <end position="44"/>
    </location>
    <ligand>
        <name>NAD(+)</name>
        <dbReference type="ChEBI" id="CHEBI:57540"/>
    </ligand>
</feature>
<feature type="binding site" evidence="1">
    <location>
        <position position="225"/>
    </location>
    <ligand>
        <name>S-adenosyl-L-methionine</name>
        <dbReference type="ChEBI" id="CHEBI:59789"/>
    </ligand>
</feature>
<feature type="binding site" evidence="1">
    <location>
        <begin position="301"/>
        <end position="303"/>
    </location>
    <ligand>
        <name>S-adenosyl-L-methionine</name>
        <dbReference type="ChEBI" id="CHEBI:59789"/>
    </ligand>
</feature>
<feature type="binding site" evidence="1">
    <location>
        <position position="306"/>
    </location>
    <ligand>
        <name>S-adenosyl-L-methionine</name>
        <dbReference type="ChEBI" id="CHEBI:59789"/>
    </ligand>
</feature>
<feature type="binding site" evidence="1">
    <location>
        <begin position="331"/>
        <end position="332"/>
    </location>
    <ligand>
        <name>S-adenosyl-L-methionine</name>
        <dbReference type="ChEBI" id="CHEBI:59789"/>
    </ligand>
</feature>
<feature type="binding site" evidence="1">
    <location>
        <position position="383"/>
    </location>
    <ligand>
        <name>S-adenosyl-L-methionine</name>
        <dbReference type="ChEBI" id="CHEBI:59789"/>
    </ligand>
</feature>
<feature type="binding site" evidence="1">
    <location>
        <position position="412"/>
    </location>
    <ligand>
        <name>S-adenosyl-L-methionine</name>
        <dbReference type="ChEBI" id="CHEBI:59789"/>
    </ligand>
</feature>
<feature type="modified residue" description="Phosphoserine" evidence="1">
    <location>
        <position position="128"/>
    </location>
</feature>